<dbReference type="EMBL" id="CP000133">
    <property type="protein sequence ID" value="ABC89633.1"/>
    <property type="molecule type" value="Genomic_DNA"/>
</dbReference>
<dbReference type="RefSeq" id="WP_011424172.1">
    <property type="nucleotide sequence ID" value="NC_007761.1"/>
</dbReference>
<dbReference type="SMR" id="Q2KC03"/>
<dbReference type="KEGG" id="ret:RHE_CH00822"/>
<dbReference type="eggNOG" id="COG3705">
    <property type="taxonomic scope" value="Bacteria"/>
</dbReference>
<dbReference type="HOGENOM" id="CLU_025113_6_0_5"/>
<dbReference type="OrthoDB" id="9797914at2"/>
<dbReference type="UniPathway" id="UPA00031">
    <property type="reaction ID" value="UER00006"/>
</dbReference>
<dbReference type="Proteomes" id="UP000001936">
    <property type="component" value="Chromosome"/>
</dbReference>
<dbReference type="GO" id="GO:0005737">
    <property type="term" value="C:cytoplasm"/>
    <property type="evidence" value="ECO:0007669"/>
    <property type="project" value="UniProtKB-SubCell"/>
</dbReference>
<dbReference type="GO" id="GO:0004821">
    <property type="term" value="F:histidine-tRNA ligase activity"/>
    <property type="evidence" value="ECO:0007669"/>
    <property type="project" value="TreeGrafter"/>
</dbReference>
<dbReference type="GO" id="GO:0006427">
    <property type="term" value="P:histidyl-tRNA aminoacylation"/>
    <property type="evidence" value="ECO:0007669"/>
    <property type="project" value="TreeGrafter"/>
</dbReference>
<dbReference type="GO" id="GO:0000105">
    <property type="term" value="P:L-histidine biosynthetic process"/>
    <property type="evidence" value="ECO:0007669"/>
    <property type="project" value="UniProtKB-UniRule"/>
</dbReference>
<dbReference type="Gene3D" id="3.30.930.10">
    <property type="entry name" value="Bira Bifunctional Protein, Domain 2"/>
    <property type="match status" value="1"/>
</dbReference>
<dbReference type="HAMAP" id="MF_00125">
    <property type="entry name" value="HisZ"/>
    <property type="match status" value="1"/>
</dbReference>
<dbReference type="InterPro" id="IPR006195">
    <property type="entry name" value="aa-tRNA-synth_II"/>
</dbReference>
<dbReference type="InterPro" id="IPR045864">
    <property type="entry name" value="aa-tRNA-synth_II/BPL/LPL"/>
</dbReference>
<dbReference type="InterPro" id="IPR041715">
    <property type="entry name" value="HisRS-like_core"/>
</dbReference>
<dbReference type="InterPro" id="IPR004516">
    <property type="entry name" value="HisRS/HisZ"/>
</dbReference>
<dbReference type="InterPro" id="IPR004517">
    <property type="entry name" value="HisZ"/>
</dbReference>
<dbReference type="NCBIfam" id="NF008951">
    <property type="entry name" value="PRK12295.1-4"/>
    <property type="match status" value="1"/>
</dbReference>
<dbReference type="PANTHER" id="PTHR43707:SF1">
    <property type="entry name" value="HISTIDINE--TRNA LIGASE, MITOCHONDRIAL-RELATED"/>
    <property type="match status" value="1"/>
</dbReference>
<dbReference type="PANTHER" id="PTHR43707">
    <property type="entry name" value="HISTIDYL-TRNA SYNTHETASE"/>
    <property type="match status" value="1"/>
</dbReference>
<dbReference type="Pfam" id="PF13393">
    <property type="entry name" value="tRNA-synt_His"/>
    <property type="match status" value="2"/>
</dbReference>
<dbReference type="PIRSF" id="PIRSF001549">
    <property type="entry name" value="His-tRNA_synth"/>
    <property type="match status" value="1"/>
</dbReference>
<dbReference type="SUPFAM" id="SSF55681">
    <property type="entry name" value="Class II aaRS and biotin synthetases"/>
    <property type="match status" value="1"/>
</dbReference>
<dbReference type="PROSITE" id="PS50862">
    <property type="entry name" value="AA_TRNA_LIGASE_II"/>
    <property type="match status" value="1"/>
</dbReference>
<organism>
    <name type="scientific">Rhizobium etli (strain ATCC 51251 / DSM 11541 / JCM 21823 / NBRC 15573 / CFN 42)</name>
    <dbReference type="NCBI Taxonomy" id="347834"/>
    <lineage>
        <taxon>Bacteria</taxon>
        <taxon>Pseudomonadati</taxon>
        <taxon>Pseudomonadota</taxon>
        <taxon>Alphaproteobacteria</taxon>
        <taxon>Hyphomicrobiales</taxon>
        <taxon>Rhizobiaceae</taxon>
        <taxon>Rhizobium/Agrobacterium group</taxon>
        <taxon>Rhizobium</taxon>
    </lineage>
</organism>
<accession>Q2KC03</accession>
<feature type="chain" id="PRO_0000242854" description="ATP phosphoribosyltransferase regulatory subunit">
    <location>
        <begin position="1"/>
        <end position="373"/>
    </location>
</feature>
<protein>
    <recommendedName>
        <fullName evidence="1">ATP phosphoribosyltransferase regulatory subunit</fullName>
    </recommendedName>
</protein>
<comment type="function">
    <text evidence="1">Required for the first step of histidine biosynthesis. May allow the feedback regulation of ATP phosphoribosyltransferase activity by histidine.</text>
</comment>
<comment type="pathway">
    <text evidence="1">Amino-acid biosynthesis; L-histidine biosynthesis; L-histidine from 5-phospho-alpha-D-ribose 1-diphosphate: step 1/9.</text>
</comment>
<comment type="subunit">
    <text evidence="1">Heteromultimer composed of HisG and HisZ subunits.</text>
</comment>
<comment type="subcellular location">
    <subcellularLocation>
        <location evidence="1">Cytoplasm</location>
    </subcellularLocation>
</comment>
<comment type="miscellaneous">
    <text>This function is generally fulfilled by the C-terminal part of HisG, which is missing in some bacteria such as this one.</text>
</comment>
<comment type="similarity">
    <text evidence="1">Belongs to the class-II aminoacyl-tRNA synthetase family. HisZ subfamily.</text>
</comment>
<sequence length="373" mass="40478">MPLINLPEFATELLSEFDARNAERIDTPVIQPAEPFLDIAGEDLRRRIFMTESETGASLCLRPEFTIPVCLRHIETATGTPKRYAYLGEVFRQRRDGANEFYQAGIEDLGDINIPSADARAIGDATGILARLLPGRRLSVTLGDQAVFEAVVQALGLPLGWQKRLIHAFGNMTQLEALLAGLVSPQFVTGLDDDIARLIASGDEQALIAHIEQEMQATGYSTNASRSPLEIARRLKEKLILSETRLDDAAFHVLEEFLSLHVPLVNASAALAGFADAAGLKLGNALSRFNGRVGALADAGVDLSCLDYRAAFGRPLDYYTGLVFEVTVEGSSAVLAGGGRFDRLLTFLGAMDRIPAVGFSFWLDRIETERAAA</sequence>
<proteinExistence type="inferred from homology"/>
<gene>
    <name evidence="1" type="primary">hisZ</name>
    <name type="ordered locus">RHE_CH00822</name>
</gene>
<reference key="1">
    <citation type="journal article" date="2006" name="Proc. Natl. Acad. Sci. U.S.A.">
        <title>The partitioned Rhizobium etli genome: genetic and metabolic redundancy in seven interacting replicons.</title>
        <authorList>
            <person name="Gonzalez V."/>
            <person name="Santamaria R.I."/>
            <person name="Bustos P."/>
            <person name="Hernandez-Gonzalez I."/>
            <person name="Medrano-Soto A."/>
            <person name="Moreno-Hagelsieb G."/>
            <person name="Janga S.C."/>
            <person name="Ramirez M.A."/>
            <person name="Jimenez-Jacinto V."/>
            <person name="Collado-Vides J."/>
            <person name="Davila G."/>
        </authorList>
    </citation>
    <scope>NUCLEOTIDE SEQUENCE [LARGE SCALE GENOMIC DNA]</scope>
    <source>
        <strain>ATCC 51251 / DSM 11541 / JCM 21823 / NBRC 15573 / CFN 42</strain>
    </source>
</reference>
<name>HISZ_RHIEC</name>
<keyword id="KW-0028">Amino-acid biosynthesis</keyword>
<keyword id="KW-0963">Cytoplasm</keyword>
<keyword id="KW-0368">Histidine biosynthesis</keyword>
<keyword id="KW-1185">Reference proteome</keyword>
<evidence type="ECO:0000255" key="1">
    <source>
        <dbReference type="HAMAP-Rule" id="MF_00125"/>
    </source>
</evidence>